<proteinExistence type="inferred from homology"/>
<keyword id="KW-0056">Arginine metabolism</keyword>
<keyword id="KW-0520">NAD</keyword>
<keyword id="KW-0560">Oxidoreductase</keyword>
<name>ASTD_BURO0</name>
<feature type="chain" id="PRO_1000138038" description="N-succinylglutamate 5-semialdehyde dehydrogenase">
    <location>
        <begin position="1"/>
        <end position="487"/>
    </location>
</feature>
<feature type="active site" evidence="1">
    <location>
        <position position="244"/>
    </location>
</feature>
<feature type="active site" evidence="1">
    <location>
        <position position="278"/>
    </location>
</feature>
<feature type="binding site" evidence="1">
    <location>
        <begin position="221"/>
        <end position="226"/>
    </location>
    <ligand>
        <name>NAD(+)</name>
        <dbReference type="ChEBI" id="CHEBI:57540"/>
    </ligand>
</feature>
<accession>B1JYT5</accession>
<organism>
    <name type="scientific">Burkholderia orbicola (strain MC0-3)</name>
    <dbReference type="NCBI Taxonomy" id="406425"/>
    <lineage>
        <taxon>Bacteria</taxon>
        <taxon>Pseudomonadati</taxon>
        <taxon>Pseudomonadota</taxon>
        <taxon>Betaproteobacteria</taxon>
        <taxon>Burkholderiales</taxon>
        <taxon>Burkholderiaceae</taxon>
        <taxon>Burkholderia</taxon>
        <taxon>Burkholderia cepacia complex</taxon>
        <taxon>Burkholderia orbicola</taxon>
    </lineage>
</organism>
<protein>
    <recommendedName>
        <fullName evidence="1">N-succinylglutamate 5-semialdehyde dehydrogenase</fullName>
        <ecNumber evidence="1">1.2.1.71</ecNumber>
    </recommendedName>
    <alternativeName>
        <fullName evidence="1">Succinylglutamic semialdehyde dehydrogenase</fullName>
        <shortName evidence="1">SGSD</shortName>
    </alternativeName>
</protein>
<gene>
    <name evidence="1" type="primary">astD</name>
    <name type="ordered locus">Bcenmc03_1160</name>
</gene>
<reference key="1">
    <citation type="submission" date="2008-02" db="EMBL/GenBank/DDBJ databases">
        <title>Complete sequence of chromosome 1 of Burkholderia cenocepacia MC0-3.</title>
        <authorList>
            <person name="Copeland A."/>
            <person name="Lucas S."/>
            <person name="Lapidus A."/>
            <person name="Barry K."/>
            <person name="Bruce D."/>
            <person name="Goodwin L."/>
            <person name="Glavina del Rio T."/>
            <person name="Dalin E."/>
            <person name="Tice H."/>
            <person name="Pitluck S."/>
            <person name="Chain P."/>
            <person name="Malfatti S."/>
            <person name="Shin M."/>
            <person name="Vergez L."/>
            <person name="Schmutz J."/>
            <person name="Larimer F."/>
            <person name="Land M."/>
            <person name="Hauser L."/>
            <person name="Kyrpides N."/>
            <person name="Mikhailova N."/>
            <person name="Tiedje J."/>
            <person name="Richardson P."/>
        </authorList>
    </citation>
    <scope>NUCLEOTIDE SEQUENCE [LARGE SCALE GENOMIC DNA]</scope>
    <source>
        <strain>MC0-3</strain>
    </source>
</reference>
<sequence length="487" mass="51796">MTELFIDGAWVAGSGPVFASRNPGTDEIAWQGESASAADVDRAVASARRAFAGWSALDFEARCAIVKRFAALLTERKEAIATAIGRETGKPLWEARTEVASMAAKVGISIQAYQERTGEKRQDMADGVAVLRHRPHGVVAVFGPYNFPGHLPNGHIVPALIAGNTVVFKPSELAPGVARATVEVWQEAGLPAGVLNLVQGEKDTGIALANHRQIDGLFFTGSSDTGTLLHKQFGGRPEIVLALEMGGNNPLVIGEVEDIDAAVHHTIQSAFLSAGQRCTCARRIFVPQGAFGDRFLARFVDVTSKITADVFDADPQPFMGAVISARAAAKLVDAQSRLIEQGAKPIIAMTQRDPRLGFVNAAIVDVTGVANLPDEEHFGPLAQIVRYATFDDAIERANDTAFGLSAGLLADDENAWAHFRRTIRAGIVNWNRPTNGASSAAPFGGTGRSGNHRPSAYYAADYCAYPMASVESTQLTLPASLSPGLHF</sequence>
<evidence type="ECO:0000255" key="1">
    <source>
        <dbReference type="HAMAP-Rule" id="MF_01174"/>
    </source>
</evidence>
<dbReference type="EC" id="1.2.1.71" evidence="1"/>
<dbReference type="EMBL" id="CP000958">
    <property type="protein sequence ID" value="ACA90335.1"/>
    <property type="molecule type" value="Genomic_DNA"/>
</dbReference>
<dbReference type="RefSeq" id="WP_012328181.1">
    <property type="nucleotide sequence ID" value="NC_010508.1"/>
</dbReference>
<dbReference type="SMR" id="B1JYT5"/>
<dbReference type="GeneID" id="83047954"/>
<dbReference type="KEGG" id="bcm:Bcenmc03_1160"/>
<dbReference type="HOGENOM" id="CLU_005391_1_0_4"/>
<dbReference type="UniPathway" id="UPA00185">
    <property type="reaction ID" value="UER00282"/>
</dbReference>
<dbReference type="Proteomes" id="UP000002169">
    <property type="component" value="Chromosome 1"/>
</dbReference>
<dbReference type="GO" id="GO:0043824">
    <property type="term" value="F:succinylglutamate-semialdehyde dehydrogenase activity"/>
    <property type="evidence" value="ECO:0007669"/>
    <property type="project" value="UniProtKB-EC"/>
</dbReference>
<dbReference type="GO" id="GO:0019544">
    <property type="term" value="P:arginine catabolic process to glutamate"/>
    <property type="evidence" value="ECO:0007669"/>
    <property type="project" value="UniProtKB-UniRule"/>
</dbReference>
<dbReference type="GO" id="GO:0019545">
    <property type="term" value="P:arginine catabolic process to succinate"/>
    <property type="evidence" value="ECO:0007669"/>
    <property type="project" value="UniProtKB-UniRule"/>
</dbReference>
<dbReference type="CDD" id="cd07095">
    <property type="entry name" value="ALDH_SGSD_AstD"/>
    <property type="match status" value="1"/>
</dbReference>
<dbReference type="FunFam" id="3.40.605.10:FF:000010">
    <property type="entry name" value="N-succinylglutamate 5-semialdehyde dehydrogenase"/>
    <property type="match status" value="1"/>
</dbReference>
<dbReference type="Gene3D" id="3.40.605.10">
    <property type="entry name" value="Aldehyde Dehydrogenase, Chain A, domain 1"/>
    <property type="match status" value="1"/>
</dbReference>
<dbReference type="Gene3D" id="3.40.309.10">
    <property type="entry name" value="Aldehyde Dehydrogenase, Chain A, domain 2"/>
    <property type="match status" value="1"/>
</dbReference>
<dbReference type="HAMAP" id="MF_01174">
    <property type="entry name" value="Aldedh_AstD"/>
    <property type="match status" value="1"/>
</dbReference>
<dbReference type="InterPro" id="IPR016161">
    <property type="entry name" value="Ald_DH/histidinol_DH"/>
</dbReference>
<dbReference type="InterPro" id="IPR016163">
    <property type="entry name" value="Ald_DH_C"/>
</dbReference>
<dbReference type="InterPro" id="IPR016160">
    <property type="entry name" value="Ald_DH_CS_CYS"/>
</dbReference>
<dbReference type="InterPro" id="IPR029510">
    <property type="entry name" value="Ald_DH_CS_GLU"/>
</dbReference>
<dbReference type="InterPro" id="IPR016162">
    <property type="entry name" value="Ald_DH_N"/>
</dbReference>
<dbReference type="InterPro" id="IPR015590">
    <property type="entry name" value="Aldehyde_DH_dom"/>
</dbReference>
<dbReference type="InterPro" id="IPR017649">
    <property type="entry name" value="SuccinylGlu_semiald_DH_AstD"/>
</dbReference>
<dbReference type="NCBIfam" id="TIGR03240">
    <property type="entry name" value="arg_catab_astD"/>
    <property type="match status" value="1"/>
</dbReference>
<dbReference type="NCBIfam" id="NF006992">
    <property type="entry name" value="PRK09457.1"/>
    <property type="match status" value="1"/>
</dbReference>
<dbReference type="PANTHER" id="PTHR11699">
    <property type="entry name" value="ALDEHYDE DEHYDROGENASE-RELATED"/>
    <property type="match status" value="1"/>
</dbReference>
<dbReference type="Pfam" id="PF00171">
    <property type="entry name" value="Aldedh"/>
    <property type="match status" value="1"/>
</dbReference>
<dbReference type="SUPFAM" id="SSF53720">
    <property type="entry name" value="ALDH-like"/>
    <property type="match status" value="1"/>
</dbReference>
<dbReference type="PROSITE" id="PS00070">
    <property type="entry name" value="ALDEHYDE_DEHYDR_CYS"/>
    <property type="match status" value="1"/>
</dbReference>
<dbReference type="PROSITE" id="PS00687">
    <property type="entry name" value="ALDEHYDE_DEHYDR_GLU"/>
    <property type="match status" value="1"/>
</dbReference>
<comment type="function">
    <text evidence="1">Catalyzes the NAD-dependent reduction of succinylglutamate semialdehyde into succinylglutamate.</text>
</comment>
<comment type="catalytic activity">
    <reaction evidence="1">
        <text>N-succinyl-L-glutamate 5-semialdehyde + NAD(+) + H2O = N-succinyl-L-glutamate + NADH + 2 H(+)</text>
        <dbReference type="Rhea" id="RHEA:10812"/>
        <dbReference type="ChEBI" id="CHEBI:15377"/>
        <dbReference type="ChEBI" id="CHEBI:15378"/>
        <dbReference type="ChEBI" id="CHEBI:57540"/>
        <dbReference type="ChEBI" id="CHEBI:57945"/>
        <dbReference type="ChEBI" id="CHEBI:58520"/>
        <dbReference type="ChEBI" id="CHEBI:58763"/>
        <dbReference type="EC" id="1.2.1.71"/>
    </reaction>
</comment>
<comment type="pathway">
    <text evidence="1">Amino-acid degradation; L-arginine degradation via AST pathway; L-glutamate and succinate from L-arginine: step 4/5.</text>
</comment>
<comment type="similarity">
    <text evidence="1">Belongs to the aldehyde dehydrogenase family. AstD subfamily.</text>
</comment>